<keyword id="KW-0687">Ribonucleoprotein</keyword>
<keyword id="KW-0689">Ribosomal protein</keyword>
<keyword id="KW-0694">RNA-binding</keyword>
<keyword id="KW-0699">rRNA-binding</keyword>
<evidence type="ECO:0000255" key="1">
    <source>
        <dbReference type="HAMAP-Rule" id="MF_01326"/>
    </source>
</evidence>
<evidence type="ECO:0000305" key="2"/>
<comment type="function">
    <text evidence="1">One of two assembly initiator proteins, it binds directly to the 5'-end of the 23S rRNA, where it nucleates assembly of the 50S subunit.</text>
</comment>
<comment type="function">
    <text evidence="1">One of the proteins that surrounds the polypeptide exit tunnel on the outside of the subunit.</text>
</comment>
<comment type="subunit">
    <text evidence="1">Part of the 50S ribosomal subunit.</text>
</comment>
<comment type="similarity">
    <text evidence="1">Belongs to the universal ribosomal protein uL24 family.</text>
</comment>
<dbReference type="EMBL" id="BA000034">
    <property type="protein sequence ID" value="BAC63148.1"/>
    <property type="molecule type" value="Genomic_DNA"/>
</dbReference>
<dbReference type="RefSeq" id="WP_002986636.1">
    <property type="nucleotide sequence ID" value="NC_004606.1"/>
</dbReference>
<dbReference type="SMR" id="P0DE27"/>
<dbReference type="GeneID" id="69900037"/>
<dbReference type="KEGG" id="sps:SPs0053"/>
<dbReference type="HOGENOM" id="CLU_093315_2_0_9"/>
<dbReference type="GO" id="GO:1990904">
    <property type="term" value="C:ribonucleoprotein complex"/>
    <property type="evidence" value="ECO:0007669"/>
    <property type="project" value="UniProtKB-KW"/>
</dbReference>
<dbReference type="GO" id="GO:0005840">
    <property type="term" value="C:ribosome"/>
    <property type="evidence" value="ECO:0007669"/>
    <property type="project" value="UniProtKB-KW"/>
</dbReference>
<dbReference type="GO" id="GO:0019843">
    <property type="term" value="F:rRNA binding"/>
    <property type="evidence" value="ECO:0007669"/>
    <property type="project" value="UniProtKB-UniRule"/>
</dbReference>
<dbReference type="GO" id="GO:0003735">
    <property type="term" value="F:structural constituent of ribosome"/>
    <property type="evidence" value="ECO:0007669"/>
    <property type="project" value="InterPro"/>
</dbReference>
<dbReference type="GO" id="GO:0006412">
    <property type="term" value="P:translation"/>
    <property type="evidence" value="ECO:0007669"/>
    <property type="project" value="UniProtKB-UniRule"/>
</dbReference>
<dbReference type="CDD" id="cd06089">
    <property type="entry name" value="KOW_RPL26"/>
    <property type="match status" value="1"/>
</dbReference>
<dbReference type="FunFam" id="2.30.30.30:FF:000004">
    <property type="entry name" value="50S ribosomal protein L24"/>
    <property type="match status" value="1"/>
</dbReference>
<dbReference type="Gene3D" id="2.30.30.30">
    <property type="match status" value="1"/>
</dbReference>
<dbReference type="HAMAP" id="MF_01326_B">
    <property type="entry name" value="Ribosomal_uL24_B"/>
    <property type="match status" value="1"/>
</dbReference>
<dbReference type="InterPro" id="IPR005824">
    <property type="entry name" value="KOW"/>
</dbReference>
<dbReference type="InterPro" id="IPR014722">
    <property type="entry name" value="Rib_uL2_dom2"/>
</dbReference>
<dbReference type="InterPro" id="IPR003256">
    <property type="entry name" value="Ribosomal_uL24"/>
</dbReference>
<dbReference type="InterPro" id="IPR005825">
    <property type="entry name" value="Ribosomal_uL24_CS"/>
</dbReference>
<dbReference type="InterPro" id="IPR041988">
    <property type="entry name" value="Ribosomal_uL24_KOW"/>
</dbReference>
<dbReference type="InterPro" id="IPR008991">
    <property type="entry name" value="Translation_prot_SH3-like_sf"/>
</dbReference>
<dbReference type="NCBIfam" id="TIGR01079">
    <property type="entry name" value="rplX_bact"/>
    <property type="match status" value="1"/>
</dbReference>
<dbReference type="PANTHER" id="PTHR12903">
    <property type="entry name" value="MITOCHONDRIAL RIBOSOMAL PROTEIN L24"/>
    <property type="match status" value="1"/>
</dbReference>
<dbReference type="Pfam" id="PF00467">
    <property type="entry name" value="KOW"/>
    <property type="match status" value="1"/>
</dbReference>
<dbReference type="Pfam" id="PF17136">
    <property type="entry name" value="ribosomal_L24"/>
    <property type="match status" value="1"/>
</dbReference>
<dbReference type="SMART" id="SM00739">
    <property type="entry name" value="KOW"/>
    <property type="match status" value="1"/>
</dbReference>
<dbReference type="SUPFAM" id="SSF50104">
    <property type="entry name" value="Translation proteins SH3-like domain"/>
    <property type="match status" value="1"/>
</dbReference>
<dbReference type="PROSITE" id="PS01108">
    <property type="entry name" value="RIBOSOMAL_L24"/>
    <property type="match status" value="1"/>
</dbReference>
<sequence length="101" mass="10917">MFVKKGDKVRVIAGKDKGTEAVVLKALPKVNKVIVEGVGMIKKHQKPNTENPQGAIVEKEAPIHVSNVQVLDKNGVAGRVGYKVVDGKKVRYSKKSGEVLD</sequence>
<accession>P0DE27</accession>
<accession>P60737</accession>
<accession>Q8P2Z5</accession>
<protein>
    <recommendedName>
        <fullName evidence="1">Large ribosomal subunit protein uL24</fullName>
    </recommendedName>
    <alternativeName>
        <fullName evidence="2">50S ribosomal protein L24</fullName>
    </alternativeName>
</protein>
<name>RL24_STRPQ</name>
<organism>
    <name type="scientific">Streptococcus pyogenes serotype M3 (strain SSI-1)</name>
    <dbReference type="NCBI Taxonomy" id="193567"/>
    <lineage>
        <taxon>Bacteria</taxon>
        <taxon>Bacillati</taxon>
        <taxon>Bacillota</taxon>
        <taxon>Bacilli</taxon>
        <taxon>Lactobacillales</taxon>
        <taxon>Streptococcaceae</taxon>
        <taxon>Streptococcus</taxon>
    </lineage>
</organism>
<proteinExistence type="inferred from homology"/>
<feature type="chain" id="PRO_0000411503" description="Large ribosomal subunit protein uL24">
    <location>
        <begin position="1"/>
        <end position="101"/>
    </location>
</feature>
<reference key="1">
    <citation type="journal article" date="2003" name="Genome Res.">
        <title>Genome sequence of an M3 strain of Streptococcus pyogenes reveals a large-scale genomic rearrangement in invasive strains and new insights into phage evolution.</title>
        <authorList>
            <person name="Nakagawa I."/>
            <person name="Kurokawa K."/>
            <person name="Yamashita A."/>
            <person name="Nakata M."/>
            <person name="Tomiyasu Y."/>
            <person name="Okahashi N."/>
            <person name="Kawabata S."/>
            <person name="Yamazaki K."/>
            <person name="Shiba T."/>
            <person name="Yasunaga T."/>
            <person name="Hayashi H."/>
            <person name="Hattori M."/>
            <person name="Hamada S."/>
        </authorList>
    </citation>
    <scope>NUCLEOTIDE SEQUENCE [LARGE SCALE GENOMIC DNA]</scope>
    <source>
        <strain>SSI-1</strain>
    </source>
</reference>
<gene>
    <name evidence="1" type="primary">rplX</name>
    <name type="ordered locus">SPs0053</name>
</gene>